<protein>
    <recommendedName>
        <fullName evidence="1">Peptide deformylase</fullName>
        <shortName evidence="1">PDF</shortName>
        <ecNumber evidence="1">3.5.1.88</ecNumber>
    </recommendedName>
    <alternativeName>
        <fullName evidence="1">Polypeptide deformylase</fullName>
    </alternativeName>
</protein>
<organism>
    <name type="scientific">Streptococcus pyogenes serotype M2 (strain MGAS10270)</name>
    <dbReference type="NCBI Taxonomy" id="370552"/>
    <lineage>
        <taxon>Bacteria</taxon>
        <taxon>Bacillati</taxon>
        <taxon>Bacillota</taxon>
        <taxon>Bacilli</taxon>
        <taxon>Lactobacillales</taxon>
        <taxon>Streptococcaceae</taxon>
        <taxon>Streptococcus</taxon>
    </lineage>
</organism>
<comment type="function">
    <text evidence="1">Removes the formyl group from the N-terminal Met of newly synthesized proteins. Requires at least a dipeptide for an efficient rate of reaction. N-terminal L-methionine is a prerequisite for activity but the enzyme has broad specificity at other positions.</text>
</comment>
<comment type="catalytic activity">
    <reaction evidence="1">
        <text>N-terminal N-formyl-L-methionyl-[peptide] + H2O = N-terminal L-methionyl-[peptide] + formate</text>
        <dbReference type="Rhea" id="RHEA:24420"/>
        <dbReference type="Rhea" id="RHEA-COMP:10639"/>
        <dbReference type="Rhea" id="RHEA-COMP:10640"/>
        <dbReference type="ChEBI" id="CHEBI:15377"/>
        <dbReference type="ChEBI" id="CHEBI:15740"/>
        <dbReference type="ChEBI" id="CHEBI:49298"/>
        <dbReference type="ChEBI" id="CHEBI:64731"/>
        <dbReference type="EC" id="3.5.1.88"/>
    </reaction>
</comment>
<comment type="cofactor">
    <cofactor evidence="1">
        <name>Fe(2+)</name>
        <dbReference type="ChEBI" id="CHEBI:29033"/>
    </cofactor>
    <text evidence="1">Binds 1 Fe(2+) ion.</text>
</comment>
<comment type="similarity">
    <text evidence="1">Belongs to the polypeptide deformylase family.</text>
</comment>
<proteinExistence type="inferred from homology"/>
<dbReference type="EC" id="3.5.1.88" evidence="1"/>
<dbReference type="EMBL" id="CP000260">
    <property type="protein sequence ID" value="ABF34802.1"/>
    <property type="molecule type" value="Genomic_DNA"/>
</dbReference>
<dbReference type="RefSeq" id="WP_002982624.1">
    <property type="nucleotide sequence ID" value="NZ_CVUH01000011.1"/>
</dbReference>
<dbReference type="SMR" id="Q1JEV7"/>
<dbReference type="GeneID" id="69901455"/>
<dbReference type="KEGG" id="sph:MGAS10270_Spy1737"/>
<dbReference type="HOGENOM" id="CLU_061901_4_0_9"/>
<dbReference type="Proteomes" id="UP000002436">
    <property type="component" value="Chromosome"/>
</dbReference>
<dbReference type="GO" id="GO:0046872">
    <property type="term" value="F:metal ion binding"/>
    <property type="evidence" value="ECO:0007669"/>
    <property type="project" value="UniProtKB-KW"/>
</dbReference>
<dbReference type="GO" id="GO:0042586">
    <property type="term" value="F:peptide deformylase activity"/>
    <property type="evidence" value="ECO:0007669"/>
    <property type="project" value="UniProtKB-UniRule"/>
</dbReference>
<dbReference type="GO" id="GO:0043686">
    <property type="term" value="P:co-translational protein modification"/>
    <property type="evidence" value="ECO:0007669"/>
    <property type="project" value="TreeGrafter"/>
</dbReference>
<dbReference type="GO" id="GO:0006412">
    <property type="term" value="P:translation"/>
    <property type="evidence" value="ECO:0007669"/>
    <property type="project" value="UniProtKB-UniRule"/>
</dbReference>
<dbReference type="CDD" id="cd00487">
    <property type="entry name" value="Pep_deformylase"/>
    <property type="match status" value="1"/>
</dbReference>
<dbReference type="FunFam" id="3.90.45.10:FF:000002">
    <property type="entry name" value="Peptide deformylase"/>
    <property type="match status" value="1"/>
</dbReference>
<dbReference type="Gene3D" id="3.90.45.10">
    <property type="entry name" value="Peptide deformylase"/>
    <property type="match status" value="1"/>
</dbReference>
<dbReference type="HAMAP" id="MF_00163">
    <property type="entry name" value="Pep_deformylase"/>
    <property type="match status" value="1"/>
</dbReference>
<dbReference type="InterPro" id="IPR023635">
    <property type="entry name" value="Peptide_deformylase"/>
</dbReference>
<dbReference type="InterPro" id="IPR036821">
    <property type="entry name" value="Peptide_deformylase_sf"/>
</dbReference>
<dbReference type="NCBIfam" id="TIGR00079">
    <property type="entry name" value="pept_deformyl"/>
    <property type="match status" value="1"/>
</dbReference>
<dbReference type="PANTHER" id="PTHR10458">
    <property type="entry name" value="PEPTIDE DEFORMYLASE"/>
    <property type="match status" value="1"/>
</dbReference>
<dbReference type="PANTHER" id="PTHR10458:SF8">
    <property type="entry name" value="PEPTIDE DEFORMYLASE 2"/>
    <property type="match status" value="1"/>
</dbReference>
<dbReference type="Pfam" id="PF01327">
    <property type="entry name" value="Pep_deformylase"/>
    <property type="match status" value="1"/>
</dbReference>
<dbReference type="PIRSF" id="PIRSF004749">
    <property type="entry name" value="Pep_def"/>
    <property type="match status" value="1"/>
</dbReference>
<dbReference type="PRINTS" id="PR01576">
    <property type="entry name" value="PDEFORMYLASE"/>
</dbReference>
<dbReference type="SUPFAM" id="SSF56420">
    <property type="entry name" value="Peptide deformylase"/>
    <property type="match status" value="1"/>
</dbReference>
<accession>Q1JEV7</accession>
<keyword id="KW-0378">Hydrolase</keyword>
<keyword id="KW-0408">Iron</keyword>
<keyword id="KW-0479">Metal-binding</keyword>
<keyword id="KW-0648">Protein biosynthesis</keyword>
<feature type="chain" id="PRO_0000301105" description="Peptide deformylase">
    <location>
        <begin position="1"/>
        <end position="204"/>
    </location>
</feature>
<feature type="active site" evidence="1">
    <location>
        <position position="175"/>
    </location>
</feature>
<feature type="binding site" evidence="1">
    <location>
        <position position="131"/>
    </location>
    <ligand>
        <name>Fe cation</name>
        <dbReference type="ChEBI" id="CHEBI:24875"/>
    </ligand>
</feature>
<feature type="binding site" evidence="1">
    <location>
        <position position="174"/>
    </location>
    <ligand>
        <name>Fe cation</name>
        <dbReference type="ChEBI" id="CHEBI:24875"/>
    </ligand>
</feature>
<feature type="binding site" evidence="1">
    <location>
        <position position="178"/>
    </location>
    <ligand>
        <name>Fe cation</name>
        <dbReference type="ChEBI" id="CHEBI:24875"/>
    </ligand>
</feature>
<name>DEF_STRPD</name>
<evidence type="ECO:0000255" key="1">
    <source>
        <dbReference type="HAMAP-Rule" id="MF_00163"/>
    </source>
</evidence>
<gene>
    <name evidence="1" type="primary">def</name>
    <name type="ordered locus">MGAS10270_Spy1737</name>
</gene>
<sequence length="204" mass="22862">MSAQDKLIKPSHLITMDDIIREGNPTLRAVAKEVSLPLCDEDILLGEKMMQFLKHSQDPVMAEKLGLRAGVGLAAPQIDVSKRIIAVLVPNLPDKEGNPPKEAYSWQEVLYNPKIVSHSVQDAALSDGEGCLSVDRVVEGYVVRHARVTVDYYDKEGQQHRIKLKGYNAIVVQHEIDHINGVLFYDRINAKNPFETKEELLILD</sequence>
<reference key="1">
    <citation type="journal article" date="2006" name="Proc. Natl. Acad. Sci. U.S.A.">
        <title>Molecular genetic anatomy of inter- and intraserotype variation in the human bacterial pathogen group A Streptococcus.</title>
        <authorList>
            <person name="Beres S.B."/>
            <person name="Richter E.W."/>
            <person name="Nagiec M.J."/>
            <person name="Sumby P."/>
            <person name="Porcella S.F."/>
            <person name="DeLeo F.R."/>
            <person name="Musser J.M."/>
        </authorList>
    </citation>
    <scope>NUCLEOTIDE SEQUENCE [LARGE SCALE GENOMIC DNA]</scope>
    <source>
        <strain>MGAS10270</strain>
    </source>
</reference>